<organism>
    <name type="scientific">Synechococcus sp. (strain CC9605)</name>
    <dbReference type="NCBI Taxonomy" id="110662"/>
    <lineage>
        <taxon>Bacteria</taxon>
        <taxon>Bacillati</taxon>
        <taxon>Cyanobacteriota</taxon>
        <taxon>Cyanophyceae</taxon>
        <taxon>Synechococcales</taxon>
        <taxon>Synechococcaceae</taxon>
        <taxon>Synechococcus</taxon>
    </lineage>
</organism>
<reference key="1">
    <citation type="submission" date="2005-07" db="EMBL/GenBank/DDBJ databases">
        <title>Complete sequence of Synechococcus sp. CC9605.</title>
        <authorList>
            <consortium name="US DOE Joint Genome Institute"/>
            <person name="Copeland A."/>
            <person name="Lucas S."/>
            <person name="Lapidus A."/>
            <person name="Barry K."/>
            <person name="Detter J.C."/>
            <person name="Glavina T."/>
            <person name="Hammon N."/>
            <person name="Israni S."/>
            <person name="Pitluck S."/>
            <person name="Schmutz J."/>
            <person name="Martinez M."/>
            <person name="Larimer F."/>
            <person name="Land M."/>
            <person name="Kyrpides N."/>
            <person name="Ivanova N."/>
            <person name="Richardson P."/>
        </authorList>
    </citation>
    <scope>NUCLEOTIDE SEQUENCE [LARGE SCALE GENOMIC DNA]</scope>
    <source>
        <strain>CC9605</strain>
    </source>
</reference>
<comment type="function">
    <text evidence="1">May play a role in DNA repair. It seems to be involved in an RecBC-independent recombinational process of DNA repair. It may act with RecF and RecO.</text>
</comment>
<comment type="similarity">
    <text evidence="1">Belongs to the RecR family.</text>
</comment>
<comment type="sequence caution" evidence="2">
    <conflict type="erroneous initiation">
        <sequence resource="EMBL-CDS" id="ABB35388"/>
    </conflict>
</comment>
<accession>Q3AJ44</accession>
<keyword id="KW-0227">DNA damage</keyword>
<keyword id="KW-0233">DNA recombination</keyword>
<keyword id="KW-0234">DNA repair</keyword>
<keyword id="KW-0479">Metal-binding</keyword>
<keyword id="KW-0862">Zinc</keyword>
<keyword id="KW-0863">Zinc-finger</keyword>
<name>RECR_SYNSC</name>
<evidence type="ECO:0000255" key="1">
    <source>
        <dbReference type="HAMAP-Rule" id="MF_00017"/>
    </source>
</evidence>
<evidence type="ECO:0000305" key="2"/>
<sequence>MARLIDQFERLPGIGPRTAQRLALHLLNQPQEQIHQFADALLAARTQVGQCQTCFHLSADPECEICRNPERRNGVICVVADSRDLLALERTREFHGRYHVLGGLISPMDGIGPELLRVTELVQRISNEEISEVILALTPSVEGDTTSLYLGRLLKPFCSVSRIAYGLPMGSELEYADEVTLSRALEGRRPV</sequence>
<dbReference type="EMBL" id="CP000110">
    <property type="protein sequence ID" value="ABB35388.1"/>
    <property type="status" value="ALT_INIT"/>
    <property type="molecule type" value="Genomic_DNA"/>
</dbReference>
<dbReference type="RefSeq" id="WP_041435682.1">
    <property type="nucleotide sequence ID" value="NC_007516.1"/>
</dbReference>
<dbReference type="SMR" id="Q3AJ44"/>
<dbReference type="STRING" id="110662.Syncc9605_1639"/>
<dbReference type="KEGG" id="syd:Syncc9605_1639"/>
<dbReference type="eggNOG" id="COG0353">
    <property type="taxonomic scope" value="Bacteria"/>
</dbReference>
<dbReference type="HOGENOM" id="CLU_060739_1_0_3"/>
<dbReference type="GO" id="GO:0003677">
    <property type="term" value="F:DNA binding"/>
    <property type="evidence" value="ECO:0007669"/>
    <property type="project" value="UniProtKB-UniRule"/>
</dbReference>
<dbReference type="GO" id="GO:0008270">
    <property type="term" value="F:zinc ion binding"/>
    <property type="evidence" value="ECO:0007669"/>
    <property type="project" value="UniProtKB-KW"/>
</dbReference>
<dbReference type="GO" id="GO:0006310">
    <property type="term" value="P:DNA recombination"/>
    <property type="evidence" value="ECO:0007669"/>
    <property type="project" value="UniProtKB-UniRule"/>
</dbReference>
<dbReference type="GO" id="GO:0006281">
    <property type="term" value="P:DNA repair"/>
    <property type="evidence" value="ECO:0007669"/>
    <property type="project" value="UniProtKB-UniRule"/>
</dbReference>
<dbReference type="CDD" id="cd01025">
    <property type="entry name" value="TOPRIM_recR"/>
    <property type="match status" value="1"/>
</dbReference>
<dbReference type="Gene3D" id="3.40.1360.10">
    <property type="match status" value="1"/>
</dbReference>
<dbReference type="Gene3D" id="6.10.250.240">
    <property type="match status" value="1"/>
</dbReference>
<dbReference type="Gene3D" id="1.10.8.420">
    <property type="entry name" value="RecR Domain 1"/>
    <property type="match status" value="1"/>
</dbReference>
<dbReference type="HAMAP" id="MF_00017">
    <property type="entry name" value="RecR"/>
    <property type="match status" value="1"/>
</dbReference>
<dbReference type="InterPro" id="IPR000093">
    <property type="entry name" value="DNA_Rcmb_RecR"/>
</dbReference>
<dbReference type="InterPro" id="IPR023627">
    <property type="entry name" value="Rcmb_RecR"/>
</dbReference>
<dbReference type="InterPro" id="IPR015967">
    <property type="entry name" value="Rcmb_RecR_Znf"/>
</dbReference>
<dbReference type="InterPro" id="IPR006171">
    <property type="entry name" value="TOPRIM_dom"/>
</dbReference>
<dbReference type="InterPro" id="IPR034137">
    <property type="entry name" value="TOPRIM_RecR"/>
</dbReference>
<dbReference type="NCBIfam" id="TIGR00615">
    <property type="entry name" value="recR"/>
    <property type="match status" value="1"/>
</dbReference>
<dbReference type="PANTHER" id="PTHR30446">
    <property type="entry name" value="RECOMBINATION PROTEIN RECR"/>
    <property type="match status" value="1"/>
</dbReference>
<dbReference type="PANTHER" id="PTHR30446:SF0">
    <property type="entry name" value="RECOMBINATION PROTEIN RECR"/>
    <property type="match status" value="1"/>
</dbReference>
<dbReference type="Pfam" id="PF21175">
    <property type="entry name" value="RecR_C"/>
    <property type="match status" value="1"/>
</dbReference>
<dbReference type="Pfam" id="PF21176">
    <property type="entry name" value="RecR_HhH"/>
    <property type="match status" value="1"/>
</dbReference>
<dbReference type="Pfam" id="PF02132">
    <property type="entry name" value="RecR_ZnF"/>
    <property type="match status" value="1"/>
</dbReference>
<dbReference type="Pfam" id="PF13662">
    <property type="entry name" value="Toprim_4"/>
    <property type="match status" value="1"/>
</dbReference>
<dbReference type="SMART" id="SM00493">
    <property type="entry name" value="TOPRIM"/>
    <property type="match status" value="1"/>
</dbReference>
<dbReference type="SUPFAM" id="SSF111304">
    <property type="entry name" value="Recombination protein RecR"/>
    <property type="match status" value="1"/>
</dbReference>
<dbReference type="PROSITE" id="PS50880">
    <property type="entry name" value="TOPRIM"/>
    <property type="match status" value="1"/>
</dbReference>
<proteinExistence type="inferred from homology"/>
<gene>
    <name evidence="1" type="primary">recR</name>
    <name type="ordered locus">Syncc9605_1639</name>
</gene>
<feature type="chain" id="PRO_0000322958" description="Recombination protein RecR">
    <location>
        <begin position="1"/>
        <end position="191"/>
    </location>
</feature>
<feature type="domain" description="Toprim" evidence="1">
    <location>
        <begin position="74"/>
        <end position="168"/>
    </location>
</feature>
<feature type="zinc finger region" description="C4-type" evidence="1">
    <location>
        <begin position="51"/>
        <end position="66"/>
    </location>
</feature>
<protein>
    <recommendedName>
        <fullName evidence="1">Recombination protein RecR</fullName>
    </recommendedName>
</protein>